<keyword id="KW-0067">ATP-binding</keyword>
<keyword id="KW-0090">Biological rhythms</keyword>
<keyword id="KW-0378">Hydrolase</keyword>
<keyword id="KW-0418">Kinase</keyword>
<keyword id="KW-0460">Magnesium</keyword>
<keyword id="KW-0479">Metal-binding</keyword>
<keyword id="KW-0547">Nucleotide-binding</keyword>
<keyword id="KW-0597">Phosphoprotein</keyword>
<keyword id="KW-1185">Reference proteome</keyword>
<keyword id="KW-0677">Repeat</keyword>
<keyword id="KW-0723">Serine/threonine-protein kinase</keyword>
<keyword id="KW-0804">Transcription</keyword>
<keyword id="KW-0805">Transcription regulation</keyword>
<keyword id="KW-0808">Transferase</keyword>
<sequence length="521" mass="58303">MNEPISNSSKKTENTTQGVRKIRTMIEGFDEITHGGLPIGRTTLVSGTSGTGKTLLAVQFLYHGIKYFDYPGLFVTFEESPTDIIQNAYSFGWDLQEIVDEGKLFILDASPDPDGQEVVGSFDLSALIERIQYAINKYKAQLVSIDSVTAVFQQYDAASVVRREIFRLVARLKLLGVTSIMTTERIEEYGPIARYGVEEFVSDNVVVLRNVLEGERRRRTAEILKLRGTTHMKGEYPFTITNDGINIFPLGAMRLTQRSSNARISSGVKTLDEMCGGGFFKDSIILATGATGTGKTLLVSKFLEEGCRQGERAILFAYEESRAQLSRNAFSWGIDFEEMERKGLLKLLCSYPESAGLEDHLQIIKSEISEFKPSRIAIDSLSALARGVTNNAFRQFVIGVTGYAKQEEITGFFTNTTDQFMGAHSITESHISTITDTIIMLQYVEIRGEMSRAINVFKMRGSWHDKGIREYSINESGPTIQDSFRNYERIISGSPTRITVDEKNELSRIVRGVKDKTLDEE</sequence>
<proteinExistence type="inferred from homology"/>
<feature type="chain" id="PRO_0000217783" description="Circadian clock oscillator protein KaiC">
    <location>
        <begin position="1"/>
        <end position="521"/>
    </location>
</feature>
<feature type="domain" description="KaiC 1" evidence="1">
    <location>
        <begin position="1"/>
        <end position="248"/>
    </location>
</feature>
<feature type="domain" description="KaiC 2" evidence="1">
    <location>
        <begin position="262"/>
        <end position="521"/>
    </location>
</feature>
<feature type="binding site" evidence="1">
    <location>
        <position position="50"/>
    </location>
    <ligand>
        <name>ATP</name>
        <dbReference type="ChEBI" id="CHEBI:30616"/>
        <label>1</label>
        <note>ligand shared between homodimeric partners</note>
    </ligand>
</feature>
<feature type="binding site" evidence="1">
    <location>
        <position position="51"/>
    </location>
    <ligand>
        <name>ATP</name>
        <dbReference type="ChEBI" id="CHEBI:30616"/>
        <label>1</label>
        <note>ligand shared between homodimeric partners</note>
    </ligand>
</feature>
<feature type="binding site" evidence="1">
    <location>
        <position position="52"/>
    </location>
    <ligand>
        <name>ATP</name>
        <dbReference type="ChEBI" id="CHEBI:30616"/>
        <label>1</label>
        <note>ligand shared between homodimeric partners</note>
    </ligand>
</feature>
<feature type="binding site" evidence="1">
    <location>
        <position position="53"/>
    </location>
    <ligand>
        <name>ATP</name>
        <dbReference type="ChEBI" id="CHEBI:30616"/>
        <label>1</label>
        <note>ligand shared between homodimeric partners</note>
    </ligand>
</feature>
<feature type="binding site" evidence="1">
    <location>
        <position position="54"/>
    </location>
    <ligand>
        <name>ATP</name>
        <dbReference type="ChEBI" id="CHEBI:30616"/>
        <label>1</label>
        <note>ligand shared between homodimeric partners</note>
    </ligand>
</feature>
<feature type="binding site" evidence="1">
    <location>
        <position position="54"/>
    </location>
    <ligand>
        <name>Mg(2+)</name>
        <dbReference type="ChEBI" id="CHEBI:18420"/>
        <label>1</label>
    </ligand>
</feature>
<feature type="binding site" evidence="1">
    <location>
        <position position="55"/>
    </location>
    <ligand>
        <name>ATP</name>
        <dbReference type="ChEBI" id="CHEBI:30616"/>
        <label>1</label>
        <note>ligand shared between homodimeric partners</note>
    </ligand>
</feature>
<feature type="binding site" evidence="1">
    <location>
        <position position="90"/>
    </location>
    <ligand>
        <name>ATP</name>
        <dbReference type="ChEBI" id="CHEBI:30616"/>
        <label>1</label>
        <note>ligand shared between homodimeric partners</note>
    </ligand>
</feature>
<feature type="binding site" evidence="1">
    <location>
        <position position="225"/>
    </location>
    <ligand>
        <name>ATP</name>
        <dbReference type="ChEBI" id="CHEBI:30616"/>
        <label>1</label>
        <note>ligand shared between homodimeric partners</note>
    </ligand>
</feature>
<feature type="binding site" evidence="1">
    <location>
        <position position="226"/>
    </location>
    <ligand>
        <name>ATP</name>
        <dbReference type="ChEBI" id="CHEBI:30616"/>
        <label>1</label>
        <note>ligand shared between homodimeric partners</note>
    </ligand>
</feature>
<feature type="binding site" evidence="1">
    <location>
        <position position="227"/>
    </location>
    <ligand>
        <name>ATP</name>
        <dbReference type="ChEBI" id="CHEBI:30616"/>
        <label>1</label>
        <note>ligand shared between homodimeric partners</note>
    </ligand>
</feature>
<feature type="binding site" evidence="1">
    <location>
        <position position="229"/>
    </location>
    <ligand>
        <name>ATP</name>
        <dbReference type="ChEBI" id="CHEBI:30616"/>
        <label>1</label>
        <note>ligand shared between homodimeric partners</note>
    </ligand>
</feature>
<feature type="binding site" evidence="1">
    <location>
        <position position="231"/>
    </location>
    <ligand>
        <name>ATP</name>
        <dbReference type="ChEBI" id="CHEBI:30616"/>
        <label>1</label>
        <note>ligand shared between homodimeric partners</note>
    </ligand>
</feature>
<feature type="binding site" evidence="1">
    <location>
        <position position="241"/>
    </location>
    <ligand>
        <name>ATP</name>
        <dbReference type="ChEBI" id="CHEBI:30616"/>
        <label>1</label>
        <note>ligand shared between homodimeric partners</note>
    </ligand>
</feature>
<feature type="binding site" evidence="1">
    <location>
        <position position="291"/>
    </location>
    <ligand>
        <name>ATP</name>
        <dbReference type="ChEBI" id="CHEBI:30616"/>
        <label>2</label>
        <note>ligand shared between homodimeric partners</note>
    </ligand>
</feature>
<feature type="binding site" evidence="1">
    <location>
        <position position="292"/>
    </location>
    <ligand>
        <name>ATP</name>
        <dbReference type="ChEBI" id="CHEBI:30616"/>
        <label>2</label>
        <note>ligand shared between homodimeric partners</note>
    </ligand>
</feature>
<feature type="binding site" evidence="1">
    <location>
        <position position="293"/>
    </location>
    <ligand>
        <name>ATP</name>
        <dbReference type="ChEBI" id="CHEBI:30616"/>
        <label>2</label>
        <note>ligand shared between homodimeric partners</note>
    </ligand>
</feature>
<feature type="binding site" evidence="1">
    <location>
        <position position="294"/>
    </location>
    <ligand>
        <name>ATP</name>
        <dbReference type="ChEBI" id="CHEBI:30616"/>
        <label>2</label>
        <note>ligand shared between homodimeric partners</note>
    </ligand>
</feature>
<feature type="binding site" evidence="1">
    <location>
        <position position="295"/>
    </location>
    <ligand>
        <name>ATP</name>
        <dbReference type="ChEBI" id="CHEBI:30616"/>
        <label>2</label>
        <note>ligand shared between homodimeric partners</note>
    </ligand>
</feature>
<feature type="binding site" evidence="1">
    <location>
        <position position="296"/>
    </location>
    <ligand>
        <name>ATP</name>
        <dbReference type="ChEBI" id="CHEBI:30616"/>
        <label>2</label>
        <note>ligand shared between homodimeric partners</note>
    </ligand>
</feature>
<feature type="binding site" evidence="1">
    <location>
        <position position="296"/>
    </location>
    <ligand>
        <name>Mg(2+)</name>
        <dbReference type="ChEBI" id="CHEBI:18420"/>
        <label>2</label>
    </ligand>
</feature>
<feature type="binding site" evidence="1">
    <location>
        <position position="297"/>
    </location>
    <ligand>
        <name>ATP</name>
        <dbReference type="ChEBI" id="CHEBI:30616"/>
        <label>2</label>
        <note>ligand shared between homodimeric partners</note>
    </ligand>
</feature>
<feature type="binding site" evidence="1">
    <location>
        <position position="319"/>
    </location>
    <ligand>
        <name>Mg(2+)</name>
        <dbReference type="ChEBI" id="CHEBI:18420"/>
        <label>2</label>
    </ligand>
</feature>
<feature type="binding site" evidence="1">
    <location>
        <position position="332"/>
    </location>
    <ligand>
        <name>ATP</name>
        <dbReference type="ChEBI" id="CHEBI:30616"/>
        <label>2</label>
        <note>ligand shared between homodimeric partners</note>
    </ligand>
</feature>
<feature type="binding site" evidence="1">
    <location>
        <position position="452"/>
    </location>
    <ligand>
        <name>ATP</name>
        <dbReference type="ChEBI" id="CHEBI:30616"/>
        <label>2</label>
        <note>ligand shared between homodimeric partners</note>
    </ligand>
</feature>
<feature type="binding site" evidence="1">
    <location>
        <position position="458"/>
    </location>
    <ligand>
        <name>ATP</name>
        <dbReference type="ChEBI" id="CHEBI:30616"/>
        <label>2</label>
        <note>ligand shared between homodimeric partners</note>
    </ligand>
</feature>
<feature type="binding site" evidence="1">
    <location>
        <position position="459"/>
    </location>
    <ligand>
        <name>ATP</name>
        <dbReference type="ChEBI" id="CHEBI:30616"/>
        <label>2</label>
        <note>ligand shared between homodimeric partners</note>
    </ligand>
</feature>
<feature type="binding site" evidence="1">
    <location>
        <position position="460"/>
    </location>
    <ligand>
        <name>ATP</name>
        <dbReference type="ChEBI" id="CHEBI:30616"/>
        <label>2</label>
        <note>ligand shared between homodimeric partners</note>
    </ligand>
</feature>
<feature type="binding site" evidence="1">
    <location>
        <position position="462"/>
    </location>
    <ligand>
        <name>ATP</name>
        <dbReference type="ChEBI" id="CHEBI:30616"/>
        <label>2</label>
        <note>ligand shared between homodimeric partners</note>
    </ligand>
</feature>
<feature type="binding site" evidence="1">
    <location>
        <position position="464"/>
    </location>
    <ligand>
        <name>ATP</name>
        <dbReference type="ChEBI" id="CHEBI:30616"/>
        <label>2</label>
        <note>ligand shared between homodimeric partners</note>
    </ligand>
</feature>
<feature type="binding site" evidence="1">
    <location>
        <position position="466"/>
    </location>
    <ligand>
        <name>ATP</name>
        <dbReference type="ChEBI" id="CHEBI:30616"/>
        <label>2</label>
        <note>ligand shared between homodimeric partners</note>
    </ligand>
</feature>
<feature type="modified residue" description="Phosphoserine; by autocatalysis" evidence="1">
    <location>
        <position position="432"/>
    </location>
</feature>
<feature type="modified residue" description="Phosphothreonine; by autocatalysis" evidence="1">
    <location>
        <position position="433"/>
    </location>
</feature>
<reference key="1">
    <citation type="submission" date="2001-10" db="EMBL/GenBank/DDBJ databases">
        <title>Hypothetical kaiB and kaiC genes in Synechococcus RF-1.</title>
        <authorList>
            <person name="Lin R.-F."/>
            <person name="Huang T.-C."/>
            <person name="Chen L.-R."/>
        </authorList>
    </citation>
    <scope>NUCLEOTIDE SEQUENCE [GENOMIC DNA]</scope>
    <source>
        <strain>PCC 8801 / RF-1</strain>
    </source>
</reference>
<reference key="2">
    <citation type="journal article" date="2011" name="MBio">
        <title>Novel metabolic attributes of the genus Cyanothece, comprising a group of unicellular nitrogen-fixing Cyanobacteria.</title>
        <authorList>
            <person name="Bandyopadhyay A."/>
            <person name="Elvitigala T."/>
            <person name="Welsh E."/>
            <person name="Stockel J."/>
            <person name="Liberton M."/>
            <person name="Min H."/>
            <person name="Sherman L.A."/>
            <person name="Pakrasi H.B."/>
        </authorList>
    </citation>
    <scope>NUCLEOTIDE SEQUENCE [LARGE SCALE GENOMIC DNA]</scope>
    <source>
        <strain>PCC 8801 / RF-1</strain>
    </source>
</reference>
<organism>
    <name type="scientific">Rippkaea orientalis (strain PCC 8801 / RF-1)</name>
    <name type="common">Cyanothece sp. (strain PCC 8801)</name>
    <dbReference type="NCBI Taxonomy" id="41431"/>
    <lineage>
        <taxon>Bacteria</taxon>
        <taxon>Bacillati</taxon>
        <taxon>Cyanobacteriota</taxon>
        <taxon>Cyanophyceae</taxon>
        <taxon>Oscillatoriophycideae</taxon>
        <taxon>Chroococcales</taxon>
        <taxon>Aphanothecaceae</taxon>
        <taxon>Rippkaea</taxon>
        <taxon>Rippkaea orientalis</taxon>
    </lineage>
</organism>
<dbReference type="EC" id="2.7.11.1" evidence="1"/>
<dbReference type="EC" id="3.6.4.-" evidence="1"/>
<dbReference type="EMBL" id="AF442204">
    <property type="protein sequence ID" value="AAL34546.1"/>
    <property type="molecule type" value="Genomic_DNA"/>
</dbReference>
<dbReference type="EMBL" id="CP001287">
    <property type="protein sequence ID" value="ACK68155.1"/>
    <property type="molecule type" value="Genomic_DNA"/>
</dbReference>
<dbReference type="RefSeq" id="WP_015785209.1">
    <property type="nucleotide sequence ID" value="NC_011726.1"/>
</dbReference>
<dbReference type="SMR" id="Q8VL13"/>
<dbReference type="STRING" id="41431.PCC8801_4231"/>
<dbReference type="KEGG" id="cyp:PCC8801_4231"/>
<dbReference type="eggNOG" id="COG0467">
    <property type="taxonomic scope" value="Bacteria"/>
</dbReference>
<dbReference type="HOGENOM" id="CLU_023669_4_1_3"/>
<dbReference type="OrthoDB" id="9787927at2"/>
<dbReference type="Proteomes" id="UP000008204">
    <property type="component" value="Chromosome"/>
</dbReference>
<dbReference type="GO" id="GO:0005524">
    <property type="term" value="F:ATP binding"/>
    <property type="evidence" value="ECO:0007669"/>
    <property type="project" value="UniProtKB-UniRule"/>
</dbReference>
<dbReference type="GO" id="GO:0016887">
    <property type="term" value="F:ATP hydrolysis activity"/>
    <property type="evidence" value="ECO:0007669"/>
    <property type="project" value="RHEA"/>
</dbReference>
<dbReference type="GO" id="GO:0003677">
    <property type="term" value="F:DNA binding"/>
    <property type="evidence" value="ECO:0007669"/>
    <property type="project" value="InterPro"/>
</dbReference>
<dbReference type="GO" id="GO:0000287">
    <property type="term" value="F:magnesium ion binding"/>
    <property type="evidence" value="ECO:0007669"/>
    <property type="project" value="UniProtKB-UniRule"/>
</dbReference>
<dbReference type="GO" id="GO:0106310">
    <property type="term" value="F:protein serine kinase activity"/>
    <property type="evidence" value="ECO:0007669"/>
    <property type="project" value="RHEA"/>
</dbReference>
<dbReference type="GO" id="GO:0004674">
    <property type="term" value="F:protein serine/threonine kinase activity"/>
    <property type="evidence" value="ECO:0007669"/>
    <property type="project" value="UniProtKB-KW"/>
</dbReference>
<dbReference type="GO" id="GO:0004712">
    <property type="term" value="F:protein serine/threonine/tyrosine kinase activity"/>
    <property type="evidence" value="ECO:0007669"/>
    <property type="project" value="UniProtKB-UniRule"/>
</dbReference>
<dbReference type="GO" id="GO:0007623">
    <property type="term" value="P:circadian rhythm"/>
    <property type="evidence" value="ECO:0007669"/>
    <property type="project" value="UniProtKB-UniRule"/>
</dbReference>
<dbReference type="GO" id="GO:0042752">
    <property type="term" value="P:regulation of circadian rhythm"/>
    <property type="evidence" value="ECO:0007669"/>
    <property type="project" value="InterPro"/>
</dbReference>
<dbReference type="GO" id="GO:0006355">
    <property type="term" value="P:regulation of DNA-templated transcription"/>
    <property type="evidence" value="ECO:0007669"/>
    <property type="project" value="InterPro"/>
</dbReference>
<dbReference type="CDD" id="cd19485">
    <property type="entry name" value="KaiC-N"/>
    <property type="match status" value="1"/>
</dbReference>
<dbReference type="CDD" id="cd19484">
    <property type="entry name" value="KaiC_C"/>
    <property type="match status" value="1"/>
</dbReference>
<dbReference type="FunFam" id="3.40.50.300:FF:001364">
    <property type="entry name" value="Circadian clock protein kinase KaiC"/>
    <property type="match status" value="1"/>
</dbReference>
<dbReference type="Gene3D" id="3.40.50.300">
    <property type="entry name" value="P-loop containing nucleotide triphosphate hydrolases"/>
    <property type="match status" value="2"/>
</dbReference>
<dbReference type="HAMAP" id="MF_01836">
    <property type="entry name" value="KaiC"/>
    <property type="match status" value="1"/>
</dbReference>
<dbReference type="InterPro" id="IPR051347">
    <property type="entry name" value="Circadian_clock_KaiC-rel"/>
</dbReference>
<dbReference type="InterPro" id="IPR013503">
    <property type="entry name" value="Circadian_KaiC_bact"/>
</dbReference>
<dbReference type="InterPro" id="IPR030665">
    <property type="entry name" value="KaiC"/>
</dbReference>
<dbReference type="InterPro" id="IPR014774">
    <property type="entry name" value="KaiC-like_dom"/>
</dbReference>
<dbReference type="InterPro" id="IPR047222">
    <property type="entry name" value="KaiC_C"/>
</dbReference>
<dbReference type="InterPro" id="IPR010624">
    <property type="entry name" value="KaiC_dom"/>
</dbReference>
<dbReference type="InterPro" id="IPR047221">
    <property type="entry name" value="KaiC_N"/>
</dbReference>
<dbReference type="InterPro" id="IPR027417">
    <property type="entry name" value="P-loop_NTPase"/>
</dbReference>
<dbReference type="NCBIfam" id="TIGR02655">
    <property type="entry name" value="circ_KaiC"/>
    <property type="match status" value="1"/>
</dbReference>
<dbReference type="NCBIfam" id="NF006799">
    <property type="entry name" value="PRK09302.1"/>
    <property type="match status" value="1"/>
</dbReference>
<dbReference type="PANTHER" id="PTHR42926">
    <property type="match status" value="1"/>
</dbReference>
<dbReference type="PANTHER" id="PTHR42926:SF1">
    <property type="entry name" value="CIRCADIAN CLOCK OSCILLATOR PROTEIN KAIC 1"/>
    <property type="match status" value="1"/>
</dbReference>
<dbReference type="Pfam" id="PF06745">
    <property type="entry name" value="ATPase"/>
    <property type="match status" value="2"/>
</dbReference>
<dbReference type="PIRSF" id="PIRSF039117">
    <property type="entry name" value="KaiC"/>
    <property type="match status" value="1"/>
</dbReference>
<dbReference type="SUPFAM" id="SSF52540">
    <property type="entry name" value="P-loop containing nucleoside triphosphate hydrolases"/>
    <property type="match status" value="2"/>
</dbReference>
<dbReference type="PROSITE" id="PS51146">
    <property type="entry name" value="KAIC"/>
    <property type="match status" value="2"/>
</dbReference>
<protein>
    <recommendedName>
        <fullName evidence="1">Circadian clock oscillator protein KaiC</fullName>
        <ecNumber evidence="1">2.7.11.1</ecNumber>
        <ecNumber evidence="1">3.6.4.-</ecNumber>
    </recommendedName>
</protein>
<gene>
    <name evidence="1" type="primary">kaiC</name>
    <name type="ordered locus">PCC8801_4231</name>
</gene>
<accession>Q8VL13</accession>
<accession>B7K6A2</accession>
<evidence type="ECO:0000255" key="1">
    <source>
        <dbReference type="HAMAP-Rule" id="MF_01836"/>
    </source>
</evidence>
<name>KAIC_RIPO1</name>
<comment type="function">
    <text evidence="1">Central component of the KaiABC oscillator complex, which constitutes the main circadian regulator in cyanobacteria. Complex composition changes during the circadian cycle to control KaiC phosphorylation. KaiA stimulates KaiC autophosphorylation, while KaiB sequesters KaiA, leading to KaiC autodephosphorylation. Clock output pathways impact the RpaA transcriptional regulator. KaiC enhances the autophosphorylation activity of SasA, which then transfers its phosphate group to RpaA to activate it. KaiB and KaiC together enhance the phospho-RpaA dephosphatase activity of CikA.</text>
</comment>
<comment type="function">
    <text evidence="1">Has a weak, temperature-independent ATPase activity; ATPase activity defines the circadian period. The phosphorylation state of KaiC modulates its ATPase activity and effects KaiB binding.</text>
</comment>
<comment type="catalytic activity">
    <reaction evidence="1">
        <text>L-seryl-[protein] + ATP = O-phospho-L-seryl-[protein] + ADP + H(+)</text>
        <dbReference type="Rhea" id="RHEA:17989"/>
        <dbReference type="Rhea" id="RHEA-COMP:9863"/>
        <dbReference type="Rhea" id="RHEA-COMP:11604"/>
        <dbReference type="ChEBI" id="CHEBI:15378"/>
        <dbReference type="ChEBI" id="CHEBI:29999"/>
        <dbReference type="ChEBI" id="CHEBI:30616"/>
        <dbReference type="ChEBI" id="CHEBI:83421"/>
        <dbReference type="ChEBI" id="CHEBI:456216"/>
        <dbReference type="EC" id="2.7.11.1"/>
    </reaction>
</comment>
<comment type="catalytic activity">
    <reaction evidence="1">
        <text>L-threonyl-[protein] + ATP = O-phospho-L-threonyl-[protein] + ADP + H(+)</text>
        <dbReference type="Rhea" id="RHEA:46608"/>
        <dbReference type="Rhea" id="RHEA-COMP:11060"/>
        <dbReference type="Rhea" id="RHEA-COMP:11605"/>
        <dbReference type="ChEBI" id="CHEBI:15378"/>
        <dbReference type="ChEBI" id="CHEBI:30013"/>
        <dbReference type="ChEBI" id="CHEBI:30616"/>
        <dbReference type="ChEBI" id="CHEBI:61977"/>
        <dbReference type="ChEBI" id="CHEBI:456216"/>
        <dbReference type="EC" id="2.7.11.1"/>
    </reaction>
</comment>
<comment type="catalytic activity">
    <reaction evidence="1">
        <text>ATP + H2O = ADP + phosphate + H(+)</text>
        <dbReference type="Rhea" id="RHEA:13065"/>
        <dbReference type="ChEBI" id="CHEBI:15377"/>
        <dbReference type="ChEBI" id="CHEBI:15378"/>
        <dbReference type="ChEBI" id="CHEBI:30616"/>
        <dbReference type="ChEBI" id="CHEBI:43474"/>
        <dbReference type="ChEBI" id="CHEBI:456216"/>
    </reaction>
</comment>
<comment type="cofactor">
    <cofactor evidence="1">
        <name>Mg(2+)</name>
        <dbReference type="ChEBI" id="CHEBI:18420"/>
    </cofactor>
    <text evidence="1">Binds 2 Mg(2+) ions per subunit, one in each domain. Mg(2+) is required for hexamerization and phosphatase activity.</text>
</comment>
<comment type="activity regulation">
    <text evidence="1">The interaction with KaiA enhances its phosphorylation status, while the interaction with KaiB decreases it.</text>
</comment>
<comment type="subunit">
    <text evidence="1">Homohexamer; hexamerization is dependent on ATP-binding. The KaiABC complex composition changes during the circadian cycle to control KaiC phosphorylation. Complexes KaiC(6), KaiA(2-4):KaiC(6), KaiB(6):KaiC(6) and KaiC(6):KaiB(6):KaiA(12) are among the most important forms, many form cooperatively. KaiC interacts with SasA, activating its autokinase function and leading to RpaA activation.</text>
</comment>
<comment type="domain">
    <text evidence="1">In the homohexamer the 2 domains (called CI and CII) self-associate to each form a 'donut' layer; the compactness and local conformation of the domains varies over the cell cycle and impacts function. CII has the autokinase and autophosphatase activities, both CI and CII have (weak) ATPase activity; CI has the clock pacemaker role.</text>
</comment>
<comment type="PTM">
    <text evidence="1">Phosphorylated on serine and threonine residues by autocatalysis. Has a 4 step phosphorylation cycle; the autokinase acts first on Thr-433, then Ser-432. When Ser-432 is modified KaiC switches to an autophosphatase mode, acting first on phospho-Thr-433 then phospho-Ser-432.</text>
</comment>
<comment type="similarity">
    <text evidence="1">Belongs to the KaiC family.</text>
</comment>